<comment type="function">
    <text evidence="1">Encapsidates the negative strand viral RNA, protecting it from nucleases. The encapsidated genomic RNA is termed the ribonucleoprotein (RNP) and serves as template for transcription and replication. The RNP needs to be localized in the host nucleus to start an infectious cycle, but is too large to diffuse through the nuclear pore complex. NP comprises at least 2 nuclear localization signals that are responsible for the active RNP import into the nucleus through cellular importin alpha/beta pathway. Later in the infection, nclear export of RNPs are mediated through viral proteins NEP interacting with M1 which binds nucleoproteins. It is possible that nucleoprotein binds directly host exportin-1/XPO1 and plays an active role in RNPs nuclear export. M1 interaction with RNP seems to hide nucleoprotein's nuclear localization signals. Soon after a virion infects a new cell, M1 dissociates from the RNP under acidification of the virion driven by M2 protein. Dissociation of M1 from RNP unmasks nucleoprotein's nuclear localization signals, targeting the RNP to the nucleus.</text>
</comment>
<comment type="subunit">
    <text evidence="1">Homomultimerizes to form the nucleocapsid. May bind host exportin-1/XPO1. Binds to viral genomic RNA. Protein-RNA contacts are mediated by a combination of electrostatic interactions between positively charged residues and the phosphate backbone and planar interactions between aromatic side chains and bases.</text>
</comment>
<comment type="subcellular location">
    <subcellularLocation>
        <location evidence="1">Virion</location>
    </subcellularLocation>
    <subcellularLocation>
        <location evidence="1">Host nucleus</location>
    </subcellularLocation>
</comment>
<comment type="PTM">
    <text evidence="1">Late in virus-infected cells, may be cleaved from a 56-kDa protein to a 53-kDa protein by a cellular caspase. This cleavage might be a marker for the onset of apoptosis in infected cells or have a specific function in virus host interaction.</text>
</comment>
<comment type="similarity">
    <text evidence="1">Belongs to the influenza viruses nucleoprotein family.</text>
</comment>
<organismHost>
    <name type="scientific">Aves</name>
    <dbReference type="NCBI Taxonomy" id="8782"/>
</organismHost>
<gene>
    <name evidence="1" type="primary">NP</name>
</gene>
<feature type="chain" id="PRO_0000079091" description="Nucleoprotein">
    <location>
        <begin position="1"/>
        <end position="498"/>
    </location>
</feature>
<feature type="region of interest" description="Disordered" evidence="2">
    <location>
        <begin position="1"/>
        <end position="21"/>
    </location>
</feature>
<feature type="short sequence motif" description="Unconventional nuclear localization signal" evidence="1">
    <location>
        <begin position="1"/>
        <end position="18"/>
    </location>
</feature>
<feature type="short sequence motif" description="Bipartite nuclear localization signal" evidence="1">
    <location>
        <begin position="198"/>
        <end position="216"/>
    </location>
</feature>
<evidence type="ECO:0000255" key="1">
    <source>
        <dbReference type="HAMAP-Rule" id="MF_04070"/>
    </source>
</evidence>
<evidence type="ECO:0000256" key="2">
    <source>
        <dbReference type="SAM" id="MobiDB-lite"/>
    </source>
</evidence>
<reference key="1">
    <citation type="journal article" date="1985" name="Virus Res.">
        <title>Sequence of the nucleoprotein gene of influenza A/parrot/Ulster/73.</title>
        <authorList>
            <person name="Steuler H."/>
            <person name="Schroder B."/>
            <person name="Burger H."/>
            <person name="Scholtissek C."/>
        </authorList>
    </citation>
    <scope>NUCLEOTIDE SEQUENCE [GENOMIC RNA]</scope>
</reference>
<accession>P07381</accession>
<sequence>MASQGTKRSYEQMETGGERQNATEIRASVGRMVGGIGRFYIQMCTELKLSDYEGRLIQNSITIERMVLSAFDERRNKYLEEHPSAGKDPKKTGGPIYKRRDGKWMRELILYDKEEIRRIWRQANNGEDATAGLTHLMIWHSNLNDATYQRTRALVRTGMDPRMCSLMQGSTLPRRSGAAGAAVKGVGTMVMELIRMIKRGINDRNFWRGENGRRTRIAYERMCNILKGKFQTAAQRAMMDQVRESRNPGNAEIEDLIFLARSALILRGSVAHKSCLPACVYGLAVASGYDFEREGYSLVGIDPFRLLQNSQVFSLIRPNENPAHKSQLVWMACHSAAFEDLRVSSFIRGTRVVPRGQLSTRGVQIASNENMETMDSSTLELRSRYWAIRTRSGGNTNQQRASAGQISVQPTFSVQRNLPFERATIMAAFTGNTEGRTSDMRTEIIRMMESARPEDVSFQGRGVFELSDEKATNPVVPSFDMSNEGSYFFGDNAEEYDN</sequence>
<proteinExistence type="inferred from homology"/>
<protein>
    <recommendedName>
        <fullName evidence="1">Nucleoprotein</fullName>
    </recommendedName>
    <alternativeName>
        <fullName evidence="1">Nucleocapsid protein</fullName>
        <shortName evidence="1">Protein N</shortName>
    </alternativeName>
</protein>
<name>NCAP_I73A0</name>
<dbReference type="EMBL" id="M22344">
    <property type="protein sequence ID" value="AAA43663.1"/>
    <property type="molecule type" value="Genomic_RNA"/>
</dbReference>
<dbReference type="SMR" id="P07381"/>
<dbReference type="GO" id="GO:0019029">
    <property type="term" value="C:helical viral capsid"/>
    <property type="evidence" value="ECO:0007669"/>
    <property type="project" value="UniProtKB-UniRule"/>
</dbReference>
<dbReference type="GO" id="GO:0043657">
    <property type="term" value="C:host cell"/>
    <property type="evidence" value="ECO:0007669"/>
    <property type="project" value="GOC"/>
</dbReference>
<dbReference type="GO" id="GO:0042025">
    <property type="term" value="C:host cell nucleus"/>
    <property type="evidence" value="ECO:0007669"/>
    <property type="project" value="UniProtKB-SubCell"/>
</dbReference>
<dbReference type="GO" id="GO:1990904">
    <property type="term" value="C:ribonucleoprotein complex"/>
    <property type="evidence" value="ECO:0007669"/>
    <property type="project" value="UniProtKB-KW"/>
</dbReference>
<dbReference type="GO" id="GO:0019013">
    <property type="term" value="C:viral nucleocapsid"/>
    <property type="evidence" value="ECO:0007669"/>
    <property type="project" value="UniProtKB-UniRule"/>
</dbReference>
<dbReference type="GO" id="GO:0003723">
    <property type="term" value="F:RNA binding"/>
    <property type="evidence" value="ECO:0007669"/>
    <property type="project" value="UniProtKB-UniRule"/>
</dbReference>
<dbReference type="GO" id="GO:0005198">
    <property type="term" value="F:structural molecule activity"/>
    <property type="evidence" value="ECO:0007669"/>
    <property type="project" value="UniProtKB-UniRule"/>
</dbReference>
<dbReference type="GO" id="GO:0046718">
    <property type="term" value="P:symbiont entry into host cell"/>
    <property type="evidence" value="ECO:0007669"/>
    <property type="project" value="UniProtKB-KW"/>
</dbReference>
<dbReference type="GO" id="GO:0075732">
    <property type="term" value="P:viral penetration into host nucleus"/>
    <property type="evidence" value="ECO:0007669"/>
    <property type="project" value="UniProtKB-UniRule"/>
</dbReference>
<dbReference type="HAMAP" id="MF_04070">
    <property type="entry name" value="INFV_NCAP"/>
    <property type="match status" value="1"/>
</dbReference>
<dbReference type="InterPro" id="IPR002141">
    <property type="entry name" value="Flu_NP"/>
</dbReference>
<dbReference type="Pfam" id="PF00506">
    <property type="entry name" value="Flu_NP"/>
    <property type="match status" value="1"/>
</dbReference>
<dbReference type="SUPFAM" id="SSF161003">
    <property type="entry name" value="flu NP-like"/>
    <property type="match status" value="1"/>
</dbReference>
<organism>
    <name type="scientific">Influenza A virus (strain A/Parrot/Ulster/1973 H7N1)</name>
    <dbReference type="NCBI Taxonomy" id="11448"/>
    <lineage>
        <taxon>Viruses</taxon>
        <taxon>Riboviria</taxon>
        <taxon>Orthornavirae</taxon>
        <taxon>Negarnaviricota</taxon>
        <taxon>Polyploviricotina</taxon>
        <taxon>Insthoviricetes</taxon>
        <taxon>Articulavirales</taxon>
        <taxon>Orthomyxoviridae</taxon>
        <taxon>Alphainfluenzavirus</taxon>
        <taxon>Alphainfluenzavirus influenzae</taxon>
        <taxon>Influenza A virus</taxon>
    </lineage>
</organism>
<keyword id="KW-0167">Capsid protein</keyword>
<keyword id="KW-1139">Helical capsid protein</keyword>
<keyword id="KW-1048">Host nucleus</keyword>
<keyword id="KW-0945">Host-virus interaction</keyword>
<keyword id="KW-0687">Ribonucleoprotein</keyword>
<keyword id="KW-0694">RNA-binding</keyword>
<keyword id="KW-0543">Viral nucleoprotein</keyword>
<keyword id="KW-1163">Viral penetration into host nucleus</keyword>
<keyword id="KW-0946">Virion</keyword>
<keyword id="KW-1160">Virus entry into host cell</keyword>